<comment type="function">
    <text evidence="1">Fluoride-specific ion channel. Important for reducing fluoride concentration in the cell, thus reducing its toxicity.</text>
</comment>
<comment type="catalytic activity">
    <reaction evidence="1">
        <text>fluoride(in) = fluoride(out)</text>
        <dbReference type="Rhea" id="RHEA:76159"/>
        <dbReference type="ChEBI" id="CHEBI:17051"/>
    </reaction>
    <physiologicalReaction direction="left-to-right" evidence="1">
        <dbReference type="Rhea" id="RHEA:76160"/>
    </physiologicalReaction>
</comment>
<comment type="activity regulation">
    <text evidence="1">Na(+) is not transported, but it plays an essential structural role and its presence is essential for fluoride channel function.</text>
</comment>
<comment type="subcellular location">
    <subcellularLocation>
        <location evidence="1">Cell membrane</location>
        <topology evidence="1">Multi-pass membrane protein</topology>
    </subcellularLocation>
</comment>
<comment type="similarity">
    <text evidence="1">Belongs to the fluoride channel Fluc/FEX (TC 1.A.43) family.</text>
</comment>
<reference key="1">
    <citation type="journal article" date="2001" name="Proc. Natl. Acad. Sci. U.S.A.">
        <title>Genome sequence of an industrial microorganism Streptomyces avermitilis: deducing the ability of producing secondary metabolites.</title>
        <authorList>
            <person name="Omura S."/>
            <person name="Ikeda H."/>
            <person name="Ishikawa J."/>
            <person name="Hanamoto A."/>
            <person name="Takahashi C."/>
            <person name="Shinose M."/>
            <person name="Takahashi Y."/>
            <person name="Horikawa H."/>
            <person name="Nakazawa H."/>
            <person name="Osonoe T."/>
            <person name="Kikuchi H."/>
            <person name="Shiba T."/>
            <person name="Sakaki Y."/>
            <person name="Hattori M."/>
        </authorList>
    </citation>
    <scope>NUCLEOTIDE SEQUENCE [LARGE SCALE GENOMIC DNA]</scope>
    <source>
        <strain>ATCC 31267 / DSM 46492 / JCM 5070 / NBRC 14893 / NCIMB 12804 / NRRL 8165 / MA-4680</strain>
    </source>
</reference>
<reference key="2">
    <citation type="journal article" date="2003" name="Nat. Biotechnol.">
        <title>Complete genome sequence and comparative analysis of the industrial microorganism Streptomyces avermitilis.</title>
        <authorList>
            <person name="Ikeda H."/>
            <person name="Ishikawa J."/>
            <person name="Hanamoto A."/>
            <person name="Shinose M."/>
            <person name="Kikuchi H."/>
            <person name="Shiba T."/>
            <person name="Sakaki Y."/>
            <person name="Hattori M."/>
            <person name="Omura S."/>
        </authorList>
    </citation>
    <scope>NUCLEOTIDE SEQUENCE [LARGE SCALE GENOMIC DNA]</scope>
    <source>
        <strain>ATCC 31267 / DSM 46492 / JCM 5070 / NBRC 14893 / NCIMB 12804 / NRRL 8165 / MA-4680</strain>
    </source>
</reference>
<organism>
    <name type="scientific">Streptomyces avermitilis (strain ATCC 31267 / DSM 46492 / JCM 5070 / NBRC 14893 / NCIMB 12804 / NRRL 8165 / MA-4680)</name>
    <dbReference type="NCBI Taxonomy" id="227882"/>
    <lineage>
        <taxon>Bacteria</taxon>
        <taxon>Bacillati</taxon>
        <taxon>Actinomycetota</taxon>
        <taxon>Actinomycetes</taxon>
        <taxon>Kitasatosporales</taxon>
        <taxon>Streptomycetaceae</taxon>
        <taxon>Streptomyces</taxon>
    </lineage>
</organism>
<accession>Q82NI1</accession>
<protein>
    <recommendedName>
        <fullName evidence="1">Fluoride-specific ion channel FluC 2</fullName>
    </recommendedName>
</protein>
<gene>
    <name evidence="1" type="primary">fluC2</name>
    <name evidence="1" type="synonym">crcB2</name>
    <name type="ordered locus">SAV_1322</name>
</gene>
<keyword id="KW-1003">Cell membrane</keyword>
<keyword id="KW-0407">Ion channel</keyword>
<keyword id="KW-0406">Ion transport</keyword>
<keyword id="KW-0472">Membrane</keyword>
<keyword id="KW-0479">Metal-binding</keyword>
<keyword id="KW-1185">Reference proteome</keyword>
<keyword id="KW-0915">Sodium</keyword>
<keyword id="KW-0812">Transmembrane</keyword>
<keyword id="KW-1133">Transmembrane helix</keyword>
<keyword id="KW-0813">Transport</keyword>
<dbReference type="EMBL" id="BA000030">
    <property type="protein sequence ID" value="BAC69032.1"/>
    <property type="molecule type" value="Genomic_DNA"/>
</dbReference>
<dbReference type="SMR" id="Q82NI1"/>
<dbReference type="GeneID" id="41538420"/>
<dbReference type="KEGG" id="sma:SAVERM_1322"/>
<dbReference type="eggNOG" id="COG0239">
    <property type="taxonomic scope" value="Bacteria"/>
</dbReference>
<dbReference type="HOGENOM" id="CLU_114342_1_0_11"/>
<dbReference type="OrthoDB" id="4408652at2"/>
<dbReference type="Proteomes" id="UP000000428">
    <property type="component" value="Chromosome"/>
</dbReference>
<dbReference type="GO" id="GO:0005886">
    <property type="term" value="C:plasma membrane"/>
    <property type="evidence" value="ECO:0007669"/>
    <property type="project" value="UniProtKB-SubCell"/>
</dbReference>
<dbReference type="GO" id="GO:0062054">
    <property type="term" value="F:fluoride channel activity"/>
    <property type="evidence" value="ECO:0007669"/>
    <property type="project" value="UniProtKB-UniRule"/>
</dbReference>
<dbReference type="GO" id="GO:0046872">
    <property type="term" value="F:metal ion binding"/>
    <property type="evidence" value="ECO:0007669"/>
    <property type="project" value="UniProtKB-KW"/>
</dbReference>
<dbReference type="GO" id="GO:0140114">
    <property type="term" value="P:cellular detoxification of fluoride"/>
    <property type="evidence" value="ECO:0007669"/>
    <property type="project" value="UniProtKB-UniRule"/>
</dbReference>
<dbReference type="HAMAP" id="MF_00454">
    <property type="entry name" value="FluC"/>
    <property type="match status" value="1"/>
</dbReference>
<dbReference type="InterPro" id="IPR003691">
    <property type="entry name" value="FluC"/>
</dbReference>
<dbReference type="NCBIfam" id="TIGR00494">
    <property type="entry name" value="crcB"/>
    <property type="match status" value="1"/>
</dbReference>
<dbReference type="PANTHER" id="PTHR28259">
    <property type="entry name" value="FLUORIDE EXPORT PROTEIN 1-RELATED"/>
    <property type="match status" value="1"/>
</dbReference>
<dbReference type="PANTHER" id="PTHR28259:SF1">
    <property type="entry name" value="FLUORIDE EXPORT PROTEIN 1-RELATED"/>
    <property type="match status" value="1"/>
</dbReference>
<dbReference type="Pfam" id="PF02537">
    <property type="entry name" value="CRCB"/>
    <property type="match status" value="1"/>
</dbReference>
<sequence length="158" mass="16697">MTVPHPESVGEPGIAVRAPARRRSAWHGQAPVVAVVALGGGIGGTARYAAALLWPTQSGGFPWTTFWVNVVGCAVIGVFMVVITDVWPAHRLVRPFFGTGVLGGFTTFSTYAVDIQKLVDAGHPRTALAYLAATLLAALAAVRLAATAARRVLVRRRR</sequence>
<feature type="chain" id="PRO_0000110190" description="Fluoride-specific ion channel FluC 2">
    <location>
        <begin position="1"/>
        <end position="158"/>
    </location>
</feature>
<feature type="transmembrane region" description="Helical" evidence="1">
    <location>
        <begin position="25"/>
        <end position="45"/>
    </location>
</feature>
<feature type="transmembrane region" description="Helical" evidence="1">
    <location>
        <begin position="63"/>
        <end position="83"/>
    </location>
</feature>
<feature type="transmembrane region" description="Helical" evidence="1">
    <location>
        <begin position="95"/>
        <end position="115"/>
    </location>
</feature>
<feature type="transmembrane region" description="Helical" evidence="1">
    <location>
        <begin position="126"/>
        <end position="146"/>
    </location>
</feature>
<feature type="binding site" evidence="1">
    <location>
        <position position="103"/>
    </location>
    <ligand>
        <name>Na(+)</name>
        <dbReference type="ChEBI" id="CHEBI:29101"/>
        <note>structural</note>
    </ligand>
</feature>
<feature type="binding site" evidence="1">
    <location>
        <position position="106"/>
    </location>
    <ligand>
        <name>Na(+)</name>
        <dbReference type="ChEBI" id="CHEBI:29101"/>
        <note>structural</note>
    </ligand>
</feature>
<evidence type="ECO:0000255" key="1">
    <source>
        <dbReference type="HAMAP-Rule" id="MF_00454"/>
    </source>
</evidence>
<proteinExistence type="inferred from homology"/>
<name>FLUC2_STRAW</name>